<protein>
    <recommendedName>
        <fullName>Protein CSN12 homolog</fullName>
    </recommendedName>
</protein>
<comment type="similarity">
    <text evidence="2">Belongs to the CSN12 family.</text>
</comment>
<organism>
    <name type="scientific">Cryptococcus neoformans var. neoformans serotype D (strain JEC21 / ATCC MYA-565)</name>
    <name type="common">Filobasidiella neoformans</name>
    <dbReference type="NCBI Taxonomy" id="214684"/>
    <lineage>
        <taxon>Eukaryota</taxon>
        <taxon>Fungi</taxon>
        <taxon>Dikarya</taxon>
        <taxon>Basidiomycota</taxon>
        <taxon>Agaricomycotina</taxon>
        <taxon>Tremellomycetes</taxon>
        <taxon>Tremellales</taxon>
        <taxon>Cryptococcaceae</taxon>
        <taxon>Cryptococcus</taxon>
        <taxon>Cryptococcus neoformans species complex</taxon>
    </lineage>
</organism>
<feature type="chain" id="PRO_0000121039" description="Protein CSN12 homolog">
    <location>
        <begin position="1"/>
        <end position="403"/>
    </location>
</feature>
<feature type="domain" description="PCI" evidence="1">
    <location>
        <begin position="211"/>
        <end position="394"/>
    </location>
</feature>
<gene>
    <name type="primary">CSN12</name>
    <name type="ordered locus">CNJ00640</name>
</gene>
<proteinExistence type="inferred from homology"/>
<keyword id="KW-1185">Reference proteome</keyword>
<name>CSN12_CRYNJ</name>
<reference key="1">
    <citation type="journal article" date="2005" name="Science">
        <title>The genome of the basidiomycetous yeast and human pathogen Cryptococcus neoformans.</title>
        <authorList>
            <person name="Loftus B.J."/>
            <person name="Fung E."/>
            <person name="Roncaglia P."/>
            <person name="Rowley D."/>
            <person name="Amedeo P."/>
            <person name="Bruno D."/>
            <person name="Vamathevan J."/>
            <person name="Miranda M."/>
            <person name="Anderson I.J."/>
            <person name="Fraser J.A."/>
            <person name="Allen J.E."/>
            <person name="Bosdet I.E."/>
            <person name="Brent M.R."/>
            <person name="Chiu R."/>
            <person name="Doering T.L."/>
            <person name="Donlin M.J."/>
            <person name="D'Souza C.A."/>
            <person name="Fox D.S."/>
            <person name="Grinberg V."/>
            <person name="Fu J."/>
            <person name="Fukushima M."/>
            <person name="Haas B.J."/>
            <person name="Huang J.C."/>
            <person name="Janbon G."/>
            <person name="Jones S.J.M."/>
            <person name="Koo H.L."/>
            <person name="Krzywinski M.I."/>
            <person name="Kwon-Chung K.J."/>
            <person name="Lengeler K.B."/>
            <person name="Maiti R."/>
            <person name="Marra M.A."/>
            <person name="Marra R.E."/>
            <person name="Mathewson C.A."/>
            <person name="Mitchell T.G."/>
            <person name="Pertea M."/>
            <person name="Riggs F.R."/>
            <person name="Salzberg S.L."/>
            <person name="Schein J.E."/>
            <person name="Shvartsbeyn A."/>
            <person name="Shin H."/>
            <person name="Shumway M."/>
            <person name="Specht C.A."/>
            <person name="Suh B.B."/>
            <person name="Tenney A."/>
            <person name="Utterback T.R."/>
            <person name="Wickes B.L."/>
            <person name="Wortman J.R."/>
            <person name="Wye N.H."/>
            <person name="Kronstad J.W."/>
            <person name="Lodge J.K."/>
            <person name="Heitman J."/>
            <person name="Davis R.W."/>
            <person name="Fraser C.M."/>
            <person name="Hyman R.W."/>
        </authorList>
    </citation>
    <scope>NUCLEOTIDE SEQUENCE [LARGE SCALE GENOMIC DNA]</scope>
    <source>
        <strain>JEC21 / ATCC MYA-565</strain>
    </source>
</reference>
<accession>P0CR48</accession>
<accession>Q55KP8</accession>
<accession>Q5KAS8</accession>
<sequence length="403" mass="46194">MKYQQFVNSFTHPLQHEDHTPLLRLLSVHGKAAKGIADTVGAIDEKRLKNPGHTLPDLWDEIAVRHCACVYALYKTKDYTEAFNQQDKLLSLFYRWFVDQSSWVLPVLYMMLSDLRDLAEQADQTIHAETGKMPSLEICTRTVSKAFSLCATDRQFKGEESRRRGVYHTACLTIKCYFKVGKPNLCKNIIRAVVSDPKTPSVDTAPLPDQVTWHFYIGMLAFLNGEDKKADEELSWALKHCPADAKRNQELILTYLIPLRLLHGRFPSASLLSQHPRLELVFTPFINAIKNGDVEEYDRRLEWAQVRLVGMSVWLVVERAREGCLRSLFKKAWMASDKSTRVPIETFRLALKLHGVDVESDEVECMVANMIYRGYLKGYISHEKKMVVLGKTNPFPKMSTIAR</sequence>
<dbReference type="EMBL" id="AE017350">
    <property type="protein sequence ID" value="AAW45800.1"/>
    <property type="molecule type" value="Genomic_DNA"/>
</dbReference>
<dbReference type="RefSeq" id="XP_567317.1">
    <property type="nucleotide sequence ID" value="XM_567317.1"/>
</dbReference>
<dbReference type="SMR" id="P0CR48"/>
<dbReference type="FunCoup" id="P0CR48">
    <property type="interactions" value="509"/>
</dbReference>
<dbReference type="STRING" id="214684.P0CR48"/>
<dbReference type="PaxDb" id="214684-P0CR48"/>
<dbReference type="EnsemblFungi" id="AAW45800">
    <property type="protein sequence ID" value="AAW45800"/>
    <property type="gene ID" value="CNJ00640"/>
</dbReference>
<dbReference type="GeneID" id="3254235"/>
<dbReference type="KEGG" id="cne:CNJ00640"/>
<dbReference type="VEuPathDB" id="FungiDB:CNJ00640"/>
<dbReference type="eggNOG" id="KOG2688">
    <property type="taxonomic scope" value="Eukaryota"/>
</dbReference>
<dbReference type="HOGENOM" id="CLU_031567_2_1_1"/>
<dbReference type="InParanoid" id="P0CR48"/>
<dbReference type="OMA" id="INRMFTL"/>
<dbReference type="OrthoDB" id="10252687at2759"/>
<dbReference type="Proteomes" id="UP000002149">
    <property type="component" value="Chromosome 10"/>
</dbReference>
<dbReference type="GO" id="GO:0070390">
    <property type="term" value="C:transcription export complex 2"/>
    <property type="evidence" value="ECO:0000318"/>
    <property type="project" value="GO_Central"/>
</dbReference>
<dbReference type="GO" id="GO:0003690">
    <property type="term" value="F:double-stranded DNA binding"/>
    <property type="evidence" value="ECO:0000318"/>
    <property type="project" value="GO_Central"/>
</dbReference>
<dbReference type="GO" id="GO:0003723">
    <property type="term" value="F:RNA binding"/>
    <property type="evidence" value="ECO:0000318"/>
    <property type="project" value="GO_Central"/>
</dbReference>
<dbReference type="GO" id="GO:0016973">
    <property type="term" value="P:poly(A)+ mRNA export from nucleus"/>
    <property type="evidence" value="ECO:0000318"/>
    <property type="project" value="GO_Central"/>
</dbReference>
<dbReference type="GO" id="GO:0000973">
    <property type="term" value="P:post-transcriptional tethering of RNA polymerase II gene DNA at nuclear periphery"/>
    <property type="evidence" value="ECO:0000318"/>
    <property type="project" value="GO_Central"/>
</dbReference>
<dbReference type="GO" id="GO:0006368">
    <property type="term" value="P:transcription elongation by RNA polymerase II"/>
    <property type="evidence" value="ECO:0000318"/>
    <property type="project" value="GO_Central"/>
</dbReference>
<dbReference type="FunFam" id="1.10.10.10:FF:000146">
    <property type="entry name" value="PCI domain-containing protein 2 homolog"/>
    <property type="match status" value="1"/>
</dbReference>
<dbReference type="Gene3D" id="1.10.10.10">
    <property type="entry name" value="Winged helix-like DNA-binding domain superfamily/Winged helix DNA-binding domain"/>
    <property type="match status" value="1"/>
</dbReference>
<dbReference type="InterPro" id="IPR045114">
    <property type="entry name" value="Csn12-like"/>
</dbReference>
<dbReference type="InterPro" id="IPR000717">
    <property type="entry name" value="PCI_dom"/>
</dbReference>
<dbReference type="InterPro" id="IPR036388">
    <property type="entry name" value="WH-like_DNA-bd_sf"/>
</dbReference>
<dbReference type="PANTHER" id="PTHR12732:SF0">
    <property type="entry name" value="PCI DOMAIN-CONTAINING PROTEIN 2"/>
    <property type="match status" value="1"/>
</dbReference>
<dbReference type="PANTHER" id="PTHR12732">
    <property type="entry name" value="UNCHARACTERIZED PROTEASOME COMPONENT REGION PCI-CONTAINING"/>
    <property type="match status" value="1"/>
</dbReference>
<dbReference type="Pfam" id="PF01399">
    <property type="entry name" value="PCI"/>
    <property type="match status" value="1"/>
</dbReference>
<dbReference type="SMART" id="SM00753">
    <property type="entry name" value="PAM"/>
    <property type="match status" value="1"/>
</dbReference>
<dbReference type="PROSITE" id="PS50250">
    <property type="entry name" value="PCI"/>
    <property type="match status" value="1"/>
</dbReference>
<evidence type="ECO:0000255" key="1">
    <source>
        <dbReference type="PROSITE-ProRule" id="PRU01185"/>
    </source>
</evidence>
<evidence type="ECO:0000305" key="2"/>